<keyword id="KW-1185">Reference proteome</keyword>
<keyword id="KW-0687">Ribonucleoprotein</keyword>
<keyword id="KW-0689">Ribosomal protein</keyword>
<feature type="chain" id="PRO_1000080366" description="Large ribosomal subunit protein bL19">
    <location>
        <begin position="1"/>
        <end position="116"/>
    </location>
</feature>
<evidence type="ECO:0000255" key="1">
    <source>
        <dbReference type="HAMAP-Rule" id="MF_00402"/>
    </source>
</evidence>
<evidence type="ECO:0000305" key="2"/>
<dbReference type="EMBL" id="CP000804">
    <property type="protein sequence ID" value="ABU58639.1"/>
    <property type="molecule type" value="Genomic_DNA"/>
</dbReference>
<dbReference type="RefSeq" id="WP_012121063.1">
    <property type="nucleotide sequence ID" value="NC_009767.1"/>
</dbReference>
<dbReference type="SMR" id="A7NM84"/>
<dbReference type="STRING" id="383372.Rcas_2561"/>
<dbReference type="KEGG" id="rca:Rcas_2561"/>
<dbReference type="eggNOG" id="COG0335">
    <property type="taxonomic scope" value="Bacteria"/>
</dbReference>
<dbReference type="HOGENOM" id="CLU_103507_2_1_0"/>
<dbReference type="OrthoDB" id="9803541at2"/>
<dbReference type="Proteomes" id="UP000000263">
    <property type="component" value="Chromosome"/>
</dbReference>
<dbReference type="GO" id="GO:0022625">
    <property type="term" value="C:cytosolic large ribosomal subunit"/>
    <property type="evidence" value="ECO:0007669"/>
    <property type="project" value="TreeGrafter"/>
</dbReference>
<dbReference type="GO" id="GO:0003735">
    <property type="term" value="F:structural constituent of ribosome"/>
    <property type="evidence" value="ECO:0007669"/>
    <property type="project" value="InterPro"/>
</dbReference>
<dbReference type="GO" id="GO:0006412">
    <property type="term" value="P:translation"/>
    <property type="evidence" value="ECO:0007669"/>
    <property type="project" value="UniProtKB-UniRule"/>
</dbReference>
<dbReference type="FunFam" id="2.30.30.790:FF:000001">
    <property type="entry name" value="50S ribosomal protein L19"/>
    <property type="match status" value="1"/>
</dbReference>
<dbReference type="Gene3D" id="2.30.30.790">
    <property type="match status" value="1"/>
</dbReference>
<dbReference type="HAMAP" id="MF_00402">
    <property type="entry name" value="Ribosomal_bL19"/>
    <property type="match status" value="1"/>
</dbReference>
<dbReference type="InterPro" id="IPR001857">
    <property type="entry name" value="Ribosomal_bL19"/>
</dbReference>
<dbReference type="InterPro" id="IPR018257">
    <property type="entry name" value="Ribosomal_bL19_CS"/>
</dbReference>
<dbReference type="InterPro" id="IPR038657">
    <property type="entry name" value="Ribosomal_bL19_sf"/>
</dbReference>
<dbReference type="InterPro" id="IPR008991">
    <property type="entry name" value="Translation_prot_SH3-like_sf"/>
</dbReference>
<dbReference type="NCBIfam" id="TIGR01024">
    <property type="entry name" value="rplS_bact"/>
    <property type="match status" value="1"/>
</dbReference>
<dbReference type="PANTHER" id="PTHR15680:SF9">
    <property type="entry name" value="LARGE RIBOSOMAL SUBUNIT PROTEIN BL19M"/>
    <property type="match status" value="1"/>
</dbReference>
<dbReference type="PANTHER" id="PTHR15680">
    <property type="entry name" value="RIBOSOMAL PROTEIN L19"/>
    <property type="match status" value="1"/>
</dbReference>
<dbReference type="Pfam" id="PF01245">
    <property type="entry name" value="Ribosomal_L19"/>
    <property type="match status" value="1"/>
</dbReference>
<dbReference type="PIRSF" id="PIRSF002191">
    <property type="entry name" value="Ribosomal_L19"/>
    <property type="match status" value="1"/>
</dbReference>
<dbReference type="PRINTS" id="PR00061">
    <property type="entry name" value="RIBOSOMALL19"/>
</dbReference>
<dbReference type="SUPFAM" id="SSF50104">
    <property type="entry name" value="Translation proteins SH3-like domain"/>
    <property type="match status" value="1"/>
</dbReference>
<dbReference type="PROSITE" id="PS01015">
    <property type="entry name" value="RIBOSOMAL_L19"/>
    <property type="match status" value="1"/>
</dbReference>
<gene>
    <name evidence="1" type="primary">rplS</name>
    <name type="ordered locus">Rcas_2561</name>
</gene>
<accession>A7NM84</accession>
<name>RL19_ROSCS</name>
<protein>
    <recommendedName>
        <fullName evidence="1">Large ribosomal subunit protein bL19</fullName>
    </recommendedName>
    <alternativeName>
        <fullName evidence="2">50S ribosomal protein L19</fullName>
    </alternativeName>
</protein>
<sequence>MSQQIIEEIERRYMKQDVPEFRVGDTVRVGVRVVEGNRERVQEFEGVVIRKRGSGLNENFTVRRIASHGIGVERTFLVHAPRVESIQVVRRGKVRRARLFYLRGLTGKAARIKERR</sequence>
<reference key="1">
    <citation type="submission" date="2007-08" db="EMBL/GenBank/DDBJ databases">
        <title>Complete sequence of Roseiflexus castenholzii DSM 13941.</title>
        <authorList>
            <consortium name="US DOE Joint Genome Institute"/>
            <person name="Copeland A."/>
            <person name="Lucas S."/>
            <person name="Lapidus A."/>
            <person name="Barry K."/>
            <person name="Glavina del Rio T."/>
            <person name="Dalin E."/>
            <person name="Tice H."/>
            <person name="Pitluck S."/>
            <person name="Thompson L.S."/>
            <person name="Brettin T."/>
            <person name="Bruce D."/>
            <person name="Detter J.C."/>
            <person name="Han C."/>
            <person name="Tapia R."/>
            <person name="Schmutz J."/>
            <person name="Larimer F."/>
            <person name="Land M."/>
            <person name="Hauser L."/>
            <person name="Kyrpides N."/>
            <person name="Mikhailova N."/>
            <person name="Bryant D.A."/>
            <person name="Hanada S."/>
            <person name="Tsukatani Y."/>
            <person name="Richardson P."/>
        </authorList>
    </citation>
    <scope>NUCLEOTIDE SEQUENCE [LARGE SCALE GENOMIC DNA]</scope>
    <source>
        <strain>DSM 13941 / HLO8</strain>
    </source>
</reference>
<organism>
    <name type="scientific">Roseiflexus castenholzii (strain DSM 13941 / HLO8)</name>
    <dbReference type="NCBI Taxonomy" id="383372"/>
    <lineage>
        <taxon>Bacteria</taxon>
        <taxon>Bacillati</taxon>
        <taxon>Chloroflexota</taxon>
        <taxon>Chloroflexia</taxon>
        <taxon>Chloroflexales</taxon>
        <taxon>Roseiflexineae</taxon>
        <taxon>Roseiflexaceae</taxon>
        <taxon>Roseiflexus</taxon>
    </lineage>
</organism>
<proteinExistence type="inferred from homology"/>
<comment type="function">
    <text evidence="1">This protein is located at the 30S-50S ribosomal subunit interface and may play a role in the structure and function of the aminoacyl-tRNA binding site.</text>
</comment>
<comment type="similarity">
    <text evidence="1">Belongs to the bacterial ribosomal protein bL19 family.</text>
</comment>